<proteinExistence type="evidence at transcript level"/>
<dbReference type="EMBL" id="AAFI02000091">
    <property type="protein sequence ID" value="EAL64005.1"/>
    <property type="molecule type" value="Genomic_DNA"/>
</dbReference>
<dbReference type="RefSeq" id="XP_637510.1">
    <property type="nucleotide sequence ID" value="XM_632418.1"/>
</dbReference>
<dbReference type="SMR" id="Q54L53"/>
<dbReference type="FunCoup" id="Q54L53">
    <property type="interactions" value="6"/>
</dbReference>
<dbReference type="STRING" id="44689.Q54L53"/>
<dbReference type="GlyCosmos" id="Q54L53">
    <property type="glycosylation" value="7 sites, No reported glycans"/>
</dbReference>
<dbReference type="GlyGen" id="Q54L53">
    <property type="glycosylation" value="7 sites"/>
</dbReference>
<dbReference type="PaxDb" id="44689-DDB0231972"/>
<dbReference type="EnsemblProtists" id="EAL64005">
    <property type="protein sequence ID" value="EAL64005"/>
    <property type="gene ID" value="DDB_G0286895"/>
</dbReference>
<dbReference type="GeneID" id="8625849"/>
<dbReference type="KEGG" id="ddi:DDB_G0286895"/>
<dbReference type="dictyBase" id="DDB_G0286895">
    <property type="gene designation" value="grlD"/>
</dbReference>
<dbReference type="VEuPathDB" id="AmoebaDB:DDB_G0286895"/>
<dbReference type="eggNOG" id="KOG1055">
    <property type="taxonomic scope" value="Eukaryota"/>
</dbReference>
<dbReference type="HOGENOM" id="CLU_365408_0_0_1"/>
<dbReference type="InParanoid" id="Q54L53"/>
<dbReference type="OMA" id="FRNTHAI"/>
<dbReference type="PhylomeDB" id="Q54L53"/>
<dbReference type="PRO" id="PR:Q54L53"/>
<dbReference type="Proteomes" id="UP000002195">
    <property type="component" value="Chromosome 4"/>
</dbReference>
<dbReference type="GO" id="GO:0097648">
    <property type="term" value="C:G protein-coupled receptor complex"/>
    <property type="evidence" value="ECO:0000314"/>
    <property type="project" value="dictyBase"/>
</dbReference>
<dbReference type="GO" id="GO:0005886">
    <property type="term" value="C:plasma membrane"/>
    <property type="evidence" value="ECO:0000318"/>
    <property type="project" value="GO_Central"/>
</dbReference>
<dbReference type="GO" id="GO:0004930">
    <property type="term" value="F:G protein-coupled receptor activity"/>
    <property type="evidence" value="ECO:0000318"/>
    <property type="project" value="GO_Central"/>
</dbReference>
<dbReference type="GO" id="GO:0001664">
    <property type="term" value="F:G protein-coupled receptor binding"/>
    <property type="evidence" value="ECO:0000314"/>
    <property type="project" value="dictyBase"/>
</dbReference>
<dbReference type="GO" id="GO:0051702">
    <property type="term" value="P:biological process involved in interaction with symbiont"/>
    <property type="evidence" value="ECO:0000315"/>
    <property type="project" value="dictyBase"/>
</dbReference>
<dbReference type="GO" id="GO:0060245">
    <property type="term" value="P:detection of cell density"/>
    <property type="evidence" value="ECO:0000314"/>
    <property type="project" value="dictyBase"/>
</dbReference>
<dbReference type="GO" id="GO:0007186">
    <property type="term" value="P:G protein-coupled receptor signaling pathway"/>
    <property type="evidence" value="ECO:0000318"/>
    <property type="project" value="GO_Central"/>
</dbReference>
<dbReference type="GO" id="GO:1903665">
    <property type="term" value="P:negative regulation of asexual reproduction"/>
    <property type="evidence" value="ECO:0000315"/>
    <property type="project" value="dictyBase"/>
</dbReference>
<dbReference type="GO" id="GO:0110094">
    <property type="term" value="P:polyphosphate-mediated signaling"/>
    <property type="evidence" value="ECO:0000315"/>
    <property type="project" value="dictyBase"/>
</dbReference>
<dbReference type="GO" id="GO:0009617">
    <property type="term" value="P:response to bacterium"/>
    <property type="evidence" value="ECO:0000314"/>
    <property type="project" value="dictyBase"/>
</dbReference>
<dbReference type="CDD" id="cd15047">
    <property type="entry name" value="7tmC_GABA-B-like"/>
    <property type="match status" value="1"/>
</dbReference>
<dbReference type="Gene3D" id="3.40.50.2300">
    <property type="match status" value="2"/>
</dbReference>
<dbReference type="InterPro" id="IPR017978">
    <property type="entry name" value="GPCR_3_C"/>
</dbReference>
<dbReference type="InterPro" id="IPR051530">
    <property type="entry name" value="mGluR/GABA-B-like"/>
</dbReference>
<dbReference type="InterPro" id="IPR003760">
    <property type="entry name" value="PnrA-like"/>
</dbReference>
<dbReference type="PANTHER" id="PTHR46924:SF3">
    <property type="entry name" value="METABOTROPIC GLUTAMATE RECEPTOR-LIKE PROTEIN C-RELATED"/>
    <property type="match status" value="1"/>
</dbReference>
<dbReference type="PANTHER" id="PTHR46924">
    <property type="entry name" value="METABOTROPIC GLUTAMATE RECEPTOR-LIKE PROTEIN C-RELATED-RELATED"/>
    <property type="match status" value="1"/>
</dbReference>
<dbReference type="Pfam" id="PF00003">
    <property type="entry name" value="7tm_3"/>
    <property type="match status" value="1"/>
</dbReference>
<dbReference type="Pfam" id="PF02608">
    <property type="entry name" value="Bmp"/>
    <property type="match status" value="1"/>
</dbReference>
<dbReference type="PROSITE" id="PS50259">
    <property type="entry name" value="G_PROTEIN_RECEP_F3_4"/>
    <property type="match status" value="1"/>
</dbReference>
<sequence length="791" mass="87715">MKINSFLIILILLFISIKNSNGEPEKKFKLITLLAAHVQDLGFNNMVNRGHVEVSKAMKLEDSQAIVVVGYNDTIRILAPLVAVGDVDLVICSSQDHAQACRELATKYKGSSIKTQFLVRGSGEATSNLITYSYNYANANYISGYFAGLYTKTNKIGFLSPGAIDNNNDSFVYAFWYGAKRANPDISFYYYNIGNYLNPDKTVAATKDLLDMGCDMVADTLNDFSTGNTLIANNRKTAMGTSGFPQRDVYGEDVIYSYNYNWFKLFYPVAQSVYSGNTNNTNWYADFNLNETISFFGLSFSFTVPNETLTKFYEELDYLKRTPRLSHPYFCNDLMYEYAKKNHLTMSTNDSTHCLANSQFTRINAPFPGMTWLGNYEITLTEVYQSRPIQIAISSISSFFIVTVLVMMGLVVRFRKNPSIRSASPIFLNFILFGALIIYVGIIIWSSSINSASCNAQFWLVTLGFTTLIGSLVVKNVRIWLIFDNPELKLVKITNLQLVPWVGVCLVINIILMSILTSVGDLREVNAQGIDSLGKYEFMRICKMNSSGASTLYTILAYFAALLLIGVFVSWKIRIVDILEFNESKAIANTLYAISFCLFVIVPLMISPQDKQSEKIILCIAGLFIVTAAVLIIFVPKFYRVYIFGSGGTSDMFYKKKKQSPVATARAESTSKGSSGGGAGSGGATGGSGVKTNKRGNLVSGDFSDDTESSLSEPNKPVKVVAGAVLAEFTDDTISDLDNIDQPIEIITENGQDSNNNNNNEENKDNNIENNKISEEIKENLKNEENNDGDN</sequence>
<protein>
    <recommendedName>
        <fullName>Metabotropic glutamate receptor-like protein D</fullName>
    </recommendedName>
</protein>
<gene>
    <name type="primary">grlD</name>
    <name type="ORF">DDB_G0286895</name>
</gene>
<name>GRLD_DICDI</name>
<comment type="subcellular location">
    <subcellularLocation>
        <location evidence="4">Membrane</location>
        <topology evidence="4">Multi-pass membrane protein</topology>
    </subcellularLocation>
</comment>
<comment type="developmental stage">
    <text evidence="3">Increasingly expressed from early aggregation.</text>
</comment>
<comment type="similarity">
    <text evidence="4">In the N-terminal section; belongs to the BMP lipoprotein family.</text>
</comment>
<comment type="similarity">
    <text evidence="4">In the C-terminal section; belongs to the G-protein coupled receptor 3 family. GABA-B receptor subfamily.</text>
</comment>
<organism>
    <name type="scientific">Dictyostelium discoideum</name>
    <name type="common">Social amoeba</name>
    <dbReference type="NCBI Taxonomy" id="44689"/>
    <lineage>
        <taxon>Eukaryota</taxon>
        <taxon>Amoebozoa</taxon>
        <taxon>Evosea</taxon>
        <taxon>Eumycetozoa</taxon>
        <taxon>Dictyostelia</taxon>
        <taxon>Dictyosteliales</taxon>
        <taxon>Dictyosteliaceae</taxon>
        <taxon>Dictyostelium</taxon>
    </lineage>
</organism>
<feature type="signal peptide" evidence="1">
    <location>
        <begin position="1"/>
        <end position="22"/>
    </location>
</feature>
<feature type="chain" id="PRO_0000370349" description="Metabotropic glutamate receptor-like protein D">
    <location>
        <begin position="23"/>
        <end position="791"/>
    </location>
</feature>
<feature type="topological domain" description="Extracellular" evidence="1">
    <location>
        <begin position="23"/>
        <end position="390"/>
    </location>
</feature>
<feature type="transmembrane region" description="Helical; Name=1" evidence="1">
    <location>
        <begin position="391"/>
        <end position="411"/>
    </location>
</feature>
<feature type="topological domain" description="Cytoplasmic" evidence="1">
    <location>
        <begin position="412"/>
        <end position="424"/>
    </location>
</feature>
<feature type="transmembrane region" description="Helical; Name=2" evidence="1">
    <location>
        <begin position="425"/>
        <end position="445"/>
    </location>
</feature>
<feature type="topological domain" description="Extracellular" evidence="1">
    <location>
        <begin position="446"/>
        <end position="453"/>
    </location>
</feature>
<feature type="transmembrane region" description="Helical; Name=3" evidence="1">
    <location>
        <begin position="454"/>
        <end position="474"/>
    </location>
</feature>
<feature type="topological domain" description="Cytoplasmic" evidence="1">
    <location>
        <begin position="475"/>
        <end position="495"/>
    </location>
</feature>
<feature type="transmembrane region" description="Helical; Name=4" evidence="1">
    <location>
        <begin position="496"/>
        <end position="516"/>
    </location>
</feature>
<feature type="topological domain" description="Extracellular" evidence="1">
    <location>
        <begin position="517"/>
        <end position="550"/>
    </location>
</feature>
<feature type="transmembrane region" description="Helical; Name=5" evidence="1">
    <location>
        <begin position="551"/>
        <end position="571"/>
    </location>
</feature>
<feature type="topological domain" description="Cytoplasmic" evidence="1">
    <location>
        <begin position="572"/>
        <end position="585"/>
    </location>
</feature>
<feature type="transmembrane region" description="Helical; Name=6" evidence="1">
    <location>
        <begin position="586"/>
        <end position="606"/>
    </location>
</feature>
<feature type="topological domain" description="Extracellular" evidence="1">
    <location>
        <begin position="607"/>
        <end position="615"/>
    </location>
</feature>
<feature type="transmembrane region" description="Helical; Name=7" evidence="1">
    <location>
        <begin position="616"/>
        <end position="636"/>
    </location>
</feature>
<feature type="topological domain" description="Cytoplasmic" evidence="1">
    <location>
        <begin position="637"/>
        <end position="791"/>
    </location>
</feature>
<feature type="region of interest" description="Disordered" evidence="2">
    <location>
        <begin position="664"/>
        <end position="715"/>
    </location>
</feature>
<feature type="region of interest" description="Disordered" evidence="2">
    <location>
        <begin position="746"/>
        <end position="791"/>
    </location>
</feature>
<feature type="coiled-coil region" evidence="1">
    <location>
        <begin position="752"/>
        <end position="781"/>
    </location>
</feature>
<feature type="compositionally biased region" description="Gly residues" evidence="2">
    <location>
        <begin position="674"/>
        <end position="689"/>
    </location>
</feature>
<feature type="compositionally biased region" description="Low complexity" evidence="2">
    <location>
        <begin position="749"/>
        <end position="760"/>
    </location>
</feature>
<feature type="compositionally biased region" description="Basic and acidic residues" evidence="2">
    <location>
        <begin position="761"/>
        <end position="785"/>
    </location>
</feature>
<feature type="glycosylation site" description="N-linked (GlcNAc...) asparagine" evidence="1">
    <location>
        <position position="72"/>
    </location>
</feature>
<feature type="glycosylation site" description="N-linked (GlcNAc...) asparagine" evidence="1">
    <location>
        <position position="168"/>
    </location>
</feature>
<feature type="glycosylation site" description="N-linked (GlcNAc...) asparagine" evidence="1">
    <location>
        <position position="279"/>
    </location>
</feature>
<feature type="glycosylation site" description="N-linked (GlcNAc...) asparagine" evidence="1">
    <location>
        <position position="290"/>
    </location>
</feature>
<feature type="glycosylation site" description="N-linked (GlcNAc...) asparagine" evidence="1">
    <location>
        <position position="306"/>
    </location>
</feature>
<feature type="glycosylation site" description="N-linked (GlcNAc...) asparagine" evidence="1">
    <location>
        <position position="349"/>
    </location>
</feature>
<feature type="glycosylation site" description="N-linked (GlcNAc...) asparagine" evidence="1">
    <location>
        <position position="545"/>
    </location>
</feature>
<reference key="1">
    <citation type="journal article" date="2005" name="Nature">
        <title>The genome of the social amoeba Dictyostelium discoideum.</title>
        <authorList>
            <person name="Eichinger L."/>
            <person name="Pachebat J.A."/>
            <person name="Gloeckner G."/>
            <person name="Rajandream M.A."/>
            <person name="Sucgang R."/>
            <person name="Berriman M."/>
            <person name="Song J."/>
            <person name="Olsen R."/>
            <person name="Szafranski K."/>
            <person name="Xu Q."/>
            <person name="Tunggal B."/>
            <person name="Kummerfeld S."/>
            <person name="Madera M."/>
            <person name="Konfortov B.A."/>
            <person name="Rivero F."/>
            <person name="Bankier A.T."/>
            <person name="Lehmann R."/>
            <person name="Hamlin N."/>
            <person name="Davies R."/>
            <person name="Gaudet P."/>
            <person name="Fey P."/>
            <person name="Pilcher K."/>
            <person name="Chen G."/>
            <person name="Saunders D."/>
            <person name="Sodergren E.J."/>
            <person name="Davis P."/>
            <person name="Kerhornou A."/>
            <person name="Nie X."/>
            <person name="Hall N."/>
            <person name="Anjard C."/>
            <person name="Hemphill L."/>
            <person name="Bason N."/>
            <person name="Farbrother P."/>
            <person name="Desany B."/>
            <person name="Just E."/>
            <person name="Morio T."/>
            <person name="Rost R."/>
            <person name="Churcher C.M."/>
            <person name="Cooper J."/>
            <person name="Haydock S."/>
            <person name="van Driessche N."/>
            <person name="Cronin A."/>
            <person name="Goodhead I."/>
            <person name="Muzny D.M."/>
            <person name="Mourier T."/>
            <person name="Pain A."/>
            <person name="Lu M."/>
            <person name="Harper D."/>
            <person name="Lindsay R."/>
            <person name="Hauser H."/>
            <person name="James K.D."/>
            <person name="Quiles M."/>
            <person name="Madan Babu M."/>
            <person name="Saito T."/>
            <person name="Buchrieser C."/>
            <person name="Wardroper A."/>
            <person name="Felder M."/>
            <person name="Thangavelu M."/>
            <person name="Johnson D."/>
            <person name="Knights A."/>
            <person name="Loulseged H."/>
            <person name="Mungall K.L."/>
            <person name="Oliver K."/>
            <person name="Price C."/>
            <person name="Quail M.A."/>
            <person name="Urushihara H."/>
            <person name="Hernandez J."/>
            <person name="Rabbinowitsch E."/>
            <person name="Steffen D."/>
            <person name="Sanders M."/>
            <person name="Ma J."/>
            <person name="Kohara Y."/>
            <person name="Sharp S."/>
            <person name="Simmonds M.N."/>
            <person name="Spiegler S."/>
            <person name="Tivey A."/>
            <person name="Sugano S."/>
            <person name="White B."/>
            <person name="Walker D."/>
            <person name="Woodward J.R."/>
            <person name="Winckler T."/>
            <person name="Tanaka Y."/>
            <person name="Shaulsky G."/>
            <person name="Schleicher M."/>
            <person name="Weinstock G.M."/>
            <person name="Rosenthal A."/>
            <person name="Cox E.C."/>
            <person name="Chisholm R.L."/>
            <person name="Gibbs R.A."/>
            <person name="Loomis W.F."/>
            <person name="Platzer M."/>
            <person name="Kay R.R."/>
            <person name="Williams J.G."/>
            <person name="Dear P.H."/>
            <person name="Noegel A.A."/>
            <person name="Barrell B.G."/>
            <person name="Kuspa A."/>
        </authorList>
    </citation>
    <scope>NUCLEOTIDE SEQUENCE [LARGE SCALE GENOMIC DNA]</scope>
    <source>
        <strain>AX4</strain>
    </source>
</reference>
<reference key="2">
    <citation type="journal article" date="2006" name="Eur. J. Cell Biol.">
        <title>The Dictyostelium repertoire of seven transmembrane domain receptors.</title>
        <authorList>
            <person name="Prabhu Y."/>
            <person name="Eichinger L."/>
        </authorList>
    </citation>
    <scope>NOMENCLATURE</scope>
</reference>
<reference key="3">
    <citation type="journal article" date="2007" name="BMC Dev. Biol.">
        <title>GrlJ, a Dictyostelium GABAB-like receptor with roles in post-aggregation development.</title>
        <authorList>
            <person name="Prabhu Y."/>
            <person name="Mueller R."/>
            <person name="Anjard C."/>
            <person name="Noegel A.A."/>
        </authorList>
    </citation>
    <scope>DEVELOPMENTAL STAGE</scope>
</reference>
<keyword id="KW-0175">Coiled coil</keyword>
<keyword id="KW-0297">G-protein coupled receptor</keyword>
<keyword id="KW-0325">Glycoprotein</keyword>
<keyword id="KW-0472">Membrane</keyword>
<keyword id="KW-0675">Receptor</keyword>
<keyword id="KW-1185">Reference proteome</keyword>
<keyword id="KW-0732">Signal</keyword>
<keyword id="KW-0807">Transducer</keyword>
<keyword id="KW-0812">Transmembrane</keyword>
<keyword id="KW-1133">Transmembrane helix</keyword>
<accession>Q54L53</accession>
<evidence type="ECO:0000255" key="1"/>
<evidence type="ECO:0000256" key="2">
    <source>
        <dbReference type="SAM" id="MobiDB-lite"/>
    </source>
</evidence>
<evidence type="ECO:0000269" key="3">
    <source>
    </source>
</evidence>
<evidence type="ECO:0000305" key="4"/>